<comment type="subunit">
    <text evidence="1">Part of the 30S ribosomal subunit.</text>
</comment>
<comment type="subcellular location">
    <subcellularLocation>
        <location>Plastid</location>
        <location>Chloroplast</location>
    </subcellularLocation>
</comment>
<comment type="similarity">
    <text evidence="2">Belongs to the universal ribosomal protein uS15 family.</text>
</comment>
<name>RR15_SOLTU</name>
<protein>
    <recommendedName>
        <fullName evidence="2">Small ribosomal subunit protein uS15c</fullName>
    </recommendedName>
    <alternativeName>
        <fullName>30S ribosomal protein S15, chloroplastic</fullName>
    </alternativeName>
</protein>
<sequence length="87" mass="10460">MVKNSVISVIFQKEKKGSVEFQVFNFTNKIRRLTSHLELHKKDYLSQRGLKKILGKRQRLLAYLAKKNRVRYKELINQLDIRETKTR</sequence>
<evidence type="ECO:0000250" key="1"/>
<evidence type="ECO:0000305" key="2"/>
<accession>Q2VEC4</accession>
<accession>Q27RZ2</accession>
<dbReference type="EMBL" id="DQ231562">
    <property type="protein sequence ID" value="ABB90094.1"/>
    <property type="molecule type" value="Genomic_DNA"/>
</dbReference>
<dbReference type="EMBL" id="DQ386163">
    <property type="protein sequence ID" value="ABD47114.1"/>
    <property type="molecule type" value="Genomic_DNA"/>
</dbReference>
<dbReference type="RefSeq" id="YP_635696.1">
    <property type="nucleotide sequence ID" value="NC_008096.2"/>
</dbReference>
<dbReference type="SMR" id="Q2VEC4"/>
<dbReference type="FunCoup" id="Q2VEC4">
    <property type="interactions" value="179"/>
</dbReference>
<dbReference type="STRING" id="4113.Q2VEC4"/>
<dbReference type="PaxDb" id="4113-PGSC0003DMT400076878"/>
<dbReference type="GeneID" id="4099912"/>
<dbReference type="KEGG" id="sot:4099912"/>
<dbReference type="eggNOG" id="KOG2815">
    <property type="taxonomic scope" value="Eukaryota"/>
</dbReference>
<dbReference type="InParanoid" id="Q2VEC4"/>
<dbReference type="OrthoDB" id="441444at2759"/>
<dbReference type="Proteomes" id="UP000011115">
    <property type="component" value="Unassembled WGS sequence"/>
</dbReference>
<dbReference type="ExpressionAtlas" id="Q2VEC4">
    <property type="expression patterns" value="baseline"/>
</dbReference>
<dbReference type="GO" id="GO:0009507">
    <property type="term" value="C:chloroplast"/>
    <property type="evidence" value="ECO:0007669"/>
    <property type="project" value="UniProtKB-SubCell"/>
</dbReference>
<dbReference type="GO" id="GO:1990904">
    <property type="term" value="C:ribonucleoprotein complex"/>
    <property type="evidence" value="ECO:0007669"/>
    <property type="project" value="UniProtKB-KW"/>
</dbReference>
<dbReference type="GO" id="GO:0005840">
    <property type="term" value="C:ribosome"/>
    <property type="evidence" value="ECO:0007669"/>
    <property type="project" value="UniProtKB-KW"/>
</dbReference>
<dbReference type="GO" id="GO:0003735">
    <property type="term" value="F:structural constituent of ribosome"/>
    <property type="evidence" value="ECO:0007669"/>
    <property type="project" value="InterPro"/>
</dbReference>
<dbReference type="GO" id="GO:0006412">
    <property type="term" value="P:translation"/>
    <property type="evidence" value="ECO:0007669"/>
    <property type="project" value="UniProtKB-UniRule"/>
</dbReference>
<dbReference type="CDD" id="cd00353">
    <property type="entry name" value="Ribosomal_S15p_S13e"/>
    <property type="match status" value="1"/>
</dbReference>
<dbReference type="Gene3D" id="1.10.287.10">
    <property type="entry name" value="S15/NS1, RNA-binding"/>
    <property type="match status" value="1"/>
</dbReference>
<dbReference type="HAMAP" id="MF_01343_B">
    <property type="entry name" value="Ribosomal_uS15_B"/>
    <property type="match status" value="1"/>
</dbReference>
<dbReference type="InterPro" id="IPR000589">
    <property type="entry name" value="Ribosomal_uS15"/>
</dbReference>
<dbReference type="InterPro" id="IPR005290">
    <property type="entry name" value="Ribosomal_uS15_bac-type"/>
</dbReference>
<dbReference type="InterPro" id="IPR009068">
    <property type="entry name" value="uS15_NS1_RNA-bd_sf"/>
</dbReference>
<dbReference type="NCBIfam" id="TIGR00952">
    <property type="entry name" value="S15_bact"/>
    <property type="match status" value="1"/>
</dbReference>
<dbReference type="PANTHER" id="PTHR23321">
    <property type="entry name" value="RIBOSOMAL PROTEIN S15, BACTERIAL AND ORGANELLAR"/>
    <property type="match status" value="1"/>
</dbReference>
<dbReference type="PANTHER" id="PTHR23321:SF26">
    <property type="entry name" value="SMALL RIBOSOMAL SUBUNIT PROTEIN US15M"/>
    <property type="match status" value="1"/>
</dbReference>
<dbReference type="Pfam" id="PF00312">
    <property type="entry name" value="Ribosomal_S15"/>
    <property type="match status" value="1"/>
</dbReference>
<dbReference type="SMART" id="SM01387">
    <property type="entry name" value="Ribosomal_S15"/>
    <property type="match status" value="1"/>
</dbReference>
<dbReference type="SUPFAM" id="SSF47060">
    <property type="entry name" value="S15/NS1 RNA-binding domain"/>
    <property type="match status" value="1"/>
</dbReference>
<dbReference type="PROSITE" id="PS00362">
    <property type="entry name" value="RIBOSOMAL_S15"/>
    <property type="match status" value="1"/>
</dbReference>
<gene>
    <name type="primary">rps15</name>
</gene>
<organism>
    <name type="scientific">Solanum tuberosum</name>
    <name type="common">Potato</name>
    <dbReference type="NCBI Taxonomy" id="4113"/>
    <lineage>
        <taxon>Eukaryota</taxon>
        <taxon>Viridiplantae</taxon>
        <taxon>Streptophyta</taxon>
        <taxon>Embryophyta</taxon>
        <taxon>Tracheophyta</taxon>
        <taxon>Spermatophyta</taxon>
        <taxon>Magnoliopsida</taxon>
        <taxon>eudicotyledons</taxon>
        <taxon>Gunneridae</taxon>
        <taxon>Pentapetalae</taxon>
        <taxon>asterids</taxon>
        <taxon>lamiids</taxon>
        <taxon>Solanales</taxon>
        <taxon>Solanaceae</taxon>
        <taxon>Solanoideae</taxon>
        <taxon>Solaneae</taxon>
        <taxon>Solanum</taxon>
    </lineage>
</organism>
<geneLocation type="chloroplast"/>
<keyword id="KW-0150">Chloroplast</keyword>
<keyword id="KW-0934">Plastid</keyword>
<keyword id="KW-1185">Reference proteome</keyword>
<keyword id="KW-0687">Ribonucleoprotein</keyword>
<keyword id="KW-0689">Ribosomal protein</keyword>
<reference key="1">
    <citation type="journal article" date="2006" name="Plant Cell Rep.">
        <title>The complete chloroplast genome sequences of Solanum tuberosum and comparative analysis with Solanaceae species identified the presence of a 241-bp deletion in cultivated potato chloroplast DNA sequence.</title>
        <authorList>
            <person name="Chung H.-J."/>
            <person name="Jung J.D."/>
            <person name="Park H.-W."/>
            <person name="Kim J.-H."/>
            <person name="Cha H.W."/>
            <person name="Min S.R."/>
            <person name="Jeong W.-J."/>
            <person name="Liu J.R."/>
        </authorList>
    </citation>
    <scope>NUCLEOTIDE SEQUENCE [LARGE SCALE GENOMIC DNA]</scope>
    <source>
        <strain>cv. Desiree</strain>
    </source>
</reference>
<reference key="2">
    <citation type="submission" date="2006-02" db="EMBL/GenBank/DDBJ databases">
        <title>Complete chloroplast genome sequences of Solanum tuberosum cultivar Desiree and comparative analyses with other Solanaceae genomes.</title>
        <authorList>
            <person name="Gargano D."/>
            <person name="Scotti N."/>
            <person name="Vezzi A."/>
            <person name="Bilardi A."/>
            <person name="Valle G."/>
            <person name="Grillo S."/>
            <person name="Cardi T."/>
        </authorList>
    </citation>
    <scope>NUCLEOTIDE SEQUENCE [LARGE SCALE GENOMIC DNA]</scope>
    <source>
        <strain>cv. Desiree</strain>
    </source>
</reference>
<proteinExistence type="inferred from homology"/>
<feature type="chain" id="PRO_0000115653" description="Small ribosomal subunit protein uS15c">
    <location>
        <begin position="1"/>
        <end position="87"/>
    </location>
</feature>